<name>RK14_LEMMI</name>
<organism>
    <name type="scientific">Lemna minor</name>
    <name type="common">Common duckweed</name>
    <dbReference type="NCBI Taxonomy" id="4472"/>
    <lineage>
        <taxon>Eukaryota</taxon>
        <taxon>Viridiplantae</taxon>
        <taxon>Streptophyta</taxon>
        <taxon>Embryophyta</taxon>
        <taxon>Tracheophyta</taxon>
        <taxon>Spermatophyta</taxon>
        <taxon>Magnoliopsida</taxon>
        <taxon>Liliopsida</taxon>
        <taxon>Araceae</taxon>
        <taxon>Lemnoideae</taxon>
        <taxon>Lemna</taxon>
    </lineage>
</organism>
<keyword id="KW-0150">Chloroplast</keyword>
<keyword id="KW-0934">Plastid</keyword>
<keyword id="KW-0687">Ribonucleoprotein</keyword>
<keyword id="KW-0689">Ribosomal protein</keyword>
<keyword id="KW-0694">RNA-binding</keyword>
<keyword id="KW-0699">rRNA-binding</keyword>
<reference key="1">
    <citation type="journal article" date="2008" name="J. Mol. Evol.">
        <title>Complete sequence of the Duckweed (Lemna minor) chloroplast genome: structural organization and phylogenetic relationships to other angiosperms.</title>
        <authorList>
            <person name="Mardanov A.V."/>
            <person name="Ravin N.V."/>
            <person name="Kuznetsov B.B."/>
            <person name="Samigullin T.H."/>
            <person name="Antonov A.S."/>
            <person name="Kolganova T.V."/>
            <person name="Skyabin K.G."/>
        </authorList>
    </citation>
    <scope>NUCLEOTIDE SEQUENCE [LARGE SCALE GENOMIC DNA]</scope>
</reference>
<geneLocation type="chloroplast"/>
<protein>
    <recommendedName>
        <fullName evidence="1">Large ribosomal subunit protein uL14c</fullName>
    </recommendedName>
    <alternativeName>
        <fullName evidence="2">50S ribosomal protein L14, chloroplastic</fullName>
    </alternativeName>
</protein>
<dbReference type="EMBL" id="DQ400350">
    <property type="protein sequence ID" value="ABD48531.1"/>
    <property type="molecule type" value="Genomic_DNA"/>
</dbReference>
<dbReference type="RefSeq" id="YP_001595544.1">
    <property type="nucleotide sequence ID" value="NC_010109.1"/>
</dbReference>
<dbReference type="SMR" id="A9L9D2"/>
<dbReference type="GeneID" id="5787508"/>
<dbReference type="GO" id="GO:0009507">
    <property type="term" value="C:chloroplast"/>
    <property type="evidence" value="ECO:0007669"/>
    <property type="project" value="UniProtKB-SubCell"/>
</dbReference>
<dbReference type="GO" id="GO:0022625">
    <property type="term" value="C:cytosolic large ribosomal subunit"/>
    <property type="evidence" value="ECO:0007669"/>
    <property type="project" value="TreeGrafter"/>
</dbReference>
<dbReference type="GO" id="GO:0070180">
    <property type="term" value="F:large ribosomal subunit rRNA binding"/>
    <property type="evidence" value="ECO:0007669"/>
    <property type="project" value="TreeGrafter"/>
</dbReference>
<dbReference type="GO" id="GO:0003735">
    <property type="term" value="F:structural constituent of ribosome"/>
    <property type="evidence" value="ECO:0007669"/>
    <property type="project" value="InterPro"/>
</dbReference>
<dbReference type="GO" id="GO:0006412">
    <property type="term" value="P:translation"/>
    <property type="evidence" value="ECO:0007669"/>
    <property type="project" value="UniProtKB-UniRule"/>
</dbReference>
<dbReference type="CDD" id="cd00337">
    <property type="entry name" value="Ribosomal_uL14"/>
    <property type="match status" value="1"/>
</dbReference>
<dbReference type="FunFam" id="2.40.150.20:FF:000002">
    <property type="entry name" value="50S ribosomal protein L14, chloroplastic"/>
    <property type="match status" value="1"/>
</dbReference>
<dbReference type="Gene3D" id="2.40.150.20">
    <property type="entry name" value="Ribosomal protein L14"/>
    <property type="match status" value="1"/>
</dbReference>
<dbReference type="HAMAP" id="MF_01367">
    <property type="entry name" value="Ribosomal_uL14"/>
    <property type="match status" value="1"/>
</dbReference>
<dbReference type="InterPro" id="IPR000218">
    <property type="entry name" value="Ribosomal_uL14"/>
</dbReference>
<dbReference type="InterPro" id="IPR005745">
    <property type="entry name" value="Ribosomal_uL14_bac-type"/>
</dbReference>
<dbReference type="InterPro" id="IPR019972">
    <property type="entry name" value="Ribosomal_uL14_CS"/>
</dbReference>
<dbReference type="InterPro" id="IPR036853">
    <property type="entry name" value="Ribosomal_uL14_sf"/>
</dbReference>
<dbReference type="NCBIfam" id="TIGR01067">
    <property type="entry name" value="rplN_bact"/>
    <property type="match status" value="1"/>
</dbReference>
<dbReference type="PANTHER" id="PTHR11761">
    <property type="entry name" value="50S/60S RIBOSOMAL PROTEIN L14/L23"/>
    <property type="match status" value="1"/>
</dbReference>
<dbReference type="PANTHER" id="PTHR11761:SF3">
    <property type="entry name" value="LARGE RIBOSOMAL SUBUNIT PROTEIN UL14M"/>
    <property type="match status" value="1"/>
</dbReference>
<dbReference type="Pfam" id="PF00238">
    <property type="entry name" value="Ribosomal_L14"/>
    <property type="match status" value="1"/>
</dbReference>
<dbReference type="SMART" id="SM01374">
    <property type="entry name" value="Ribosomal_L14"/>
    <property type="match status" value="1"/>
</dbReference>
<dbReference type="SUPFAM" id="SSF50193">
    <property type="entry name" value="Ribosomal protein L14"/>
    <property type="match status" value="1"/>
</dbReference>
<dbReference type="PROSITE" id="PS00049">
    <property type="entry name" value="RIBOSOMAL_L14"/>
    <property type="match status" value="1"/>
</dbReference>
<proteinExistence type="inferred from homology"/>
<sequence>MIQPQTLLNVADNSGARELMCIRILGASNRRYANIGDVIVAVIKEAVPNMPLERSEVIRAVIVRTRKELKRENGMRIRYDDNAAVVIDQEGNPKGTRVFGAIARELRELNFTKIVSLAPEVL</sequence>
<feature type="chain" id="PRO_0000355885" description="Large ribosomal subunit protein uL14c">
    <location>
        <begin position="1"/>
        <end position="122"/>
    </location>
</feature>
<evidence type="ECO:0000255" key="1">
    <source>
        <dbReference type="HAMAP-Rule" id="MF_01367"/>
    </source>
</evidence>
<evidence type="ECO:0000305" key="2"/>
<comment type="function">
    <text evidence="1">Binds to 23S rRNA.</text>
</comment>
<comment type="subunit">
    <text evidence="1">Part of the 50S ribosomal subunit.</text>
</comment>
<comment type="subcellular location">
    <subcellularLocation>
        <location>Plastid</location>
        <location>Chloroplast</location>
    </subcellularLocation>
</comment>
<comment type="similarity">
    <text evidence="1">Belongs to the universal ribosomal protein uL14 family.</text>
</comment>
<accession>A9L9D2</accession>
<gene>
    <name evidence="1" type="primary">rpl14</name>
</gene>